<keyword id="KW-0963">Cytoplasm</keyword>
<keyword id="KW-0227">DNA damage</keyword>
<keyword id="KW-0233">DNA recombination</keyword>
<keyword id="KW-0234">DNA repair</keyword>
<keyword id="KW-0238">DNA-binding</keyword>
<keyword id="KW-0255">Endonuclease</keyword>
<keyword id="KW-0378">Hydrolase</keyword>
<keyword id="KW-0460">Magnesium</keyword>
<keyword id="KW-0479">Metal-binding</keyword>
<keyword id="KW-0540">Nuclease</keyword>
<keyword id="KW-1185">Reference proteome</keyword>
<feature type="chain" id="PRO_1000090549" description="Crossover junction endodeoxyribonuclease RuvC">
    <location>
        <begin position="1"/>
        <end position="173"/>
    </location>
</feature>
<feature type="active site" evidence="1">
    <location>
        <position position="8"/>
    </location>
</feature>
<feature type="active site" evidence="1">
    <location>
        <position position="67"/>
    </location>
</feature>
<feature type="active site" evidence="1">
    <location>
        <position position="139"/>
    </location>
</feature>
<feature type="binding site" evidence="1">
    <location>
        <position position="8"/>
    </location>
    <ligand>
        <name>Mg(2+)</name>
        <dbReference type="ChEBI" id="CHEBI:18420"/>
        <label>1</label>
    </ligand>
</feature>
<feature type="binding site" evidence="1">
    <location>
        <position position="67"/>
    </location>
    <ligand>
        <name>Mg(2+)</name>
        <dbReference type="ChEBI" id="CHEBI:18420"/>
        <label>2</label>
    </ligand>
</feature>
<feature type="binding site" evidence="1">
    <location>
        <position position="139"/>
    </location>
    <ligand>
        <name>Mg(2+)</name>
        <dbReference type="ChEBI" id="CHEBI:18420"/>
        <label>1</label>
    </ligand>
</feature>
<gene>
    <name evidence="1" type="primary">ruvC</name>
    <name type="ordered locus">PMI1114</name>
</gene>
<evidence type="ECO:0000255" key="1">
    <source>
        <dbReference type="HAMAP-Rule" id="MF_00034"/>
    </source>
</evidence>
<reference key="1">
    <citation type="journal article" date="2008" name="J. Bacteriol.">
        <title>Complete genome sequence of uropathogenic Proteus mirabilis, a master of both adherence and motility.</title>
        <authorList>
            <person name="Pearson M.M."/>
            <person name="Sebaihia M."/>
            <person name="Churcher C."/>
            <person name="Quail M.A."/>
            <person name="Seshasayee A.S."/>
            <person name="Luscombe N.M."/>
            <person name="Abdellah Z."/>
            <person name="Arrosmith C."/>
            <person name="Atkin B."/>
            <person name="Chillingworth T."/>
            <person name="Hauser H."/>
            <person name="Jagels K."/>
            <person name="Moule S."/>
            <person name="Mungall K."/>
            <person name="Norbertczak H."/>
            <person name="Rabbinowitsch E."/>
            <person name="Walker D."/>
            <person name="Whithead S."/>
            <person name="Thomson N.R."/>
            <person name="Rather P.N."/>
            <person name="Parkhill J."/>
            <person name="Mobley H.L.T."/>
        </authorList>
    </citation>
    <scope>NUCLEOTIDE SEQUENCE [LARGE SCALE GENOMIC DNA]</scope>
    <source>
        <strain>HI4320</strain>
    </source>
</reference>
<organism>
    <name type="scientific">Proteus mirabilis (strain HI4320)</name>
    <dbReference type="NCBI Taxonomy" id="529507"/>
    <lineage>
        <taxon>Bacteria</taxon>
        <taxon>Pseudomonadati</taxon>
        <taxon>Pseudomonadota</taxon>
        <taxon>Gammaproteobacteria</taxon>
        <taxon>Enterobacterales</taxon>
        <taxon>Morganellaceae</taxon>
        <taxon>Proteus</taxon>
    </lineage>
</organism>
<protein>
    <recommendedName>
        <fullName evidence="1">Crossover junction endodeoxyribonuclease RuvC</fullName>
        <ecNumber evidence="1">3.1.21.10</ecNumber>
    </recommendedName>
    <alternativeName>
        <fullName evidence="1">Holliday junction nuclease RuvC</fullName>
    </alternativeName>
    <alternativeName>
        <fullName evidence="1">Holliday junction resolvase RuvC</fullName>
    </alternativeName>
</protein>
<name>RUVC_PROMH</name>
<sequence length="173" mass="18635">MAIILGIDPGSRVTGYGVIRQQGRQLIYLGSGCIRTQVPDLPSRLKRIYAGVSEIITQFSPDVFSVEQVFMAKNADSALKLGQARGVAILAAVNNDLPVFEYAARQVKQSVVGTGGADKSQVQHMVRSILKLSAAPQADAADALAIAITHCHFNQNLLRVGDPRLVLTRGRLR</sequence>
<accession>B4ETP6</accession>
<comment type="function">
    <text evidence="1">The RuvA-RuvB-RuvC complex processes Holliday junction (HJ) DNA during genetic recombination and DNA repair. Endonuclease that resolves HJ intermediates. Cleaves cruciform DNA by making single-stranded nicks across the HJ at symmetrical positions within the homologous arms, yielding a 5'-phosphate and a 3'-hydroxyl group; requires a central core of homology in the junction. The consensus cleavage sequence is 5'-(A/T)TT(C/G)-3'. Cleavage occurs on the 3'-side of the TT dinucleotide at the point of strand exchange. HJ branch migration catalyzed by RuvA-RuvB allows RuvC to scan DNA until it finds its consensus sequence, where it cleaves and resolves the cruciform DNA.</text>
</comment>
<comment type="catalytic activity">
    <reaction evidence="1">
        <text>Endonucleolytic cleavage at a junction such as a reciprocal single-stranded crossover between two homologous DNA duplexes (Holliday junction).</text>
        <dbReference type="EC" id="3.1.21.10"/>
    </reaction>
</comment>
<comment type="cofactor">
    <cofactor evidence="1">
        <name>Mg(2+)</name>
        <dbReference type="ChEBI" id="CHEBI:18420"/>
    </cofactor>
    <text evidence="1">Binds 2 Mg(2+) ion per subunit.</text>
</comment>
<comment type="subunit">
    <text evidence="1">Homodimer which binds Holliday junction (HJ) DNA. The HJ becomes 2-fold symmetrical on binding to RuvC with unstacked arms; it has a different conformation from HJ DNA in complex with RuvA. In the full resolvosome a probable DNA-RuvA(4)-RuvB(12)-RuvC(2) complex forms which resolves the HJ.</text>
</comment>
<comment type="subcellular location">
    <subcellularLocation>
        <location evidence="1">Cytoplasm</location>
    </subcellularLocation>
</comment>
<comment type="similarity">
    <text evidence="1">Belongs to the RuvC family.</text>
</comment>
<dbReference type="EC" id="3.1.21.10" evidence="1"/>
<dbReference type="EMBL" id="AM942759">
    <property type="protein sequence ID" value="CAR42405.1"/>
    <property type="molecule type" value="Genomic_DNA"/>
</dbReference>
<dbReference type="RefSeq" id="WP_004242730.1">
    <property type="nucleotide sequence ID" value="NC_010554.1"/>
</dbReference>
<dbReference type="SMR" id="B4ETP6"/>
<dbReference type="EnsemblBacteria" id="CAR42405">
    <property type="protein sequence ID" value="CAR42405"/>
    <property type="gene ID" value="PMI1114"/>
</dbReference>
<dbReference type="GeneID" id="6800790"/>
<dbReference type="KEGG" id="pmr:PMI1114"/>
<dbReference type="eggNOG" id="COG0817">
    <property type="taxonomic scope" value="Bacteria"/>
</dbReference>
<dbReference type="HOGENOM" id="CLU_091257_2_1_6"/>
<dbReference type="Proteomes" id="UP000008319">
    <property type="component" value="Chromosome"/>
</dbReference>
<dbReference type="GO" id="GO:0005737">
    <property type="term" value="C:cytoplasm"/>
    <property type="evidence" value="ECO:0007669"/>
    <property type="project" value="UniProtKB-SubCell"/>
</dbReference>
<dbReference type="GO" id="GO:0048476">
    <property type="term" value="C:Holliday junction resolvase complex"/>
    <property type="evidence" value="ECO:0007669"/>
    <property type="project" value="UniProtKB-UniRule"/>
</dbReference>
<dbReference type="GO" id="GO:0008821">
    <property type="term" value="F:crossover junction DNA endonuclease activity"/>
    <property type="evidence" value="ECO:0007669"/>
    <property type="project" value="UniProtKB-UniRule"/>
</dbReference>
<dbReference type="GO" id="GO:0003677">
    <property type="term" value="F:DNA binding"/>
    <property type="evidence" value="ECO:0007669"/>
    <property type="project" value="UniProtKB-KW"/>
</dbReference>
<dbReference type="GO" id="GO:0000287">
    <property type="term" value="F:magnesium ion binding"/>
    <property type="evidence" value="ECO:0007669"/>
    <property type="project" value="UniProtKB-UniRule"/>
</dbReference>
<dbReference type="GO" id="GO:0006310">
    <property type="term" value="P:DNA recombination"/>
    <property type="evidence" value="ECO:0007669"/>
    <property type="project" value="UniProtKB-UniRule"/>
</dbReference>
<dbReference type="GO" id="GO:0006281">
    <property type="term" value="P:DNA repair"/>
    <property type="evidence" value="ECO:0007669"/>
    <property type="project" value="UniProtKB-UniRule"/>
</dbReference>
<dbReference type="CDD" id="cd16962">
    <property type="entry name" value="RuvC"/>
    <property type="match status" value="1"/>
</dbReference>
<dbReference type="FunFam" id="3.30.420.10:FF:000002">
    <property type="entry name" value="Crossover junction endodeoxyribonuclease RuvC"/>
    <property type="match status" value="1"/>
</dbReference>
<dbReference type="Gene3D" id="3.30.420.10">
    <property type="entry name" value="Ribonuclease H-like superfamily/Ribonuclease H"/>
    <property type="match status" value="1"/>
</dbReference>
<dbReference type="HAMAP" id="MF_00034">
    <property type="entry name" value="RuvC"/>
    <property type="match status" value="1"/>
</dbReference>
<dbReference type="InterPro" id="IPR012337">
    <property type="entry name" value="RNaseH-like_sf"/>
</dbReference>
<dbReference type="InterPro" id="IPR036397">
    <property type="entry name" value="RNaseH_sf"/>
</dbReference>
<dbReference type="InterPro" id="IPR020563">
    <property type="entry name" value="X-over_junc_endoDNase_Mg_BS"/>
</dbReference>
<dbReference type="InterPro" id="IPR002176">
    <property type="entry name" value="X-over_junc_endoDNase_RuvC"/>
</dbReference>
<dbReference type="NCBIfam" id="NF000711">
    <property type="entry name" value="PRK00039.2-1"/>
    <property type="match status" value="1"/>
</dbReference>
<dbReference type="NCBIfam" id="TIGR00228">
    <property type="entry name" value="ruvC"/>
    <property type="match status" value="1"/>
</dbReference>
<dbReference type="PANTHER" id="PTHR30194">
    <property type="entry name" value="CROSSOVER JUNCTION ENDODEOXYRIBONUCLEASE RUVC"/>
    <property type="match status" value="1"/>
</dbReference>
<dbReference type="PANTHER" id="PTHR30194:SF3">
    <property type="entry name" value="CROSSOVER JUNCTION ENDODEOXYRIBONUCLEASE RUVC"/>
    <property type="match status" value="1"/>
</dbReference>
<dbReference type="Pfam" id="PF02075">
    <property type="entry name" value="RuvC"/>
    <property type="match status" value="1"/>
</dbReference>
<dbReference type="PRINTS" id="PR00696">
    <property type="entry name" value="RSOLVASERUVC"/>
</dbReference>
<dbReference type="SUPFAM" id="SSF53098">
    <property type="entry name" value="Ribonuclease H-like"/>
    <property type="match status" value="1"/>
</dbReference>
<dbReference type="PROSITE" id="PS01321">
    <property type="entry name" value="RUVC"/>
    <property type="match status" value="1"/>
</dbReference>
<proteinExistence type="inferred from homology"/>